<keyword id="KW-0007">Acetylation</keyword>
<keyword id="KW-1015">Disulfide bond</keyword>
<keyword id="KW-0256">Endoplasmic reticulum</keyword>
<keyword id="KW-0456">Lyase</keyword>
<keyword id="KW-0472">Membrane</keyword>
<keyword id="KW-1185">Reference proteome</keyword>
<keyword id="KW-0812">Transmembrane</keyword>
<keyword id="KW-1133">Transmembrane helix</keyword>
<organism>
    <name type="scientific">Ovis aries</name>
    <name type="common">Sheep</name>
    <dbReference type="NCBI Taxonomy" id="9940"/>
    <lineage>
        <taxon>Eukaryota</taxon>
        <taxon>Metazoa</taxon>
        <taxon>Chordata</taxon>
        <taxon>Craniata</taxon>
        <taxon>Vertebrata</taxon>
        <taxon>Euteleostomi</taxon>
        <taxon>Mammalia</taxon>
        <taxon>Eutheria</taxon>
        <taxon>Laurasiatheria</taxon>
        <taxon>Artiodactyla</taxon>
        <taxon>Ruminantia</taxon>
        <taxon>Pecora</taxon>
        <taxon>Bovidae</taxon>
        <taxon>Caprinae</taxon>
        <taxon>Ovis</taxon>
    </lineage>
</organism>
<evidence type="ECO:0000250" key="1"/>
<evidence type="ECO:0000250" key="2">
    <source>
        <dbReference type="UniProtKB" id="O88496"/>
    </source>
</evidence>
<evidence type="ECO:0000250" key="3">
    <source>
        <dbReference type="UniProtKB" id="P38435"/>
    </source>
</evidence>
<evidence type="ECO:0000255" key="4"/>
<evidence type="ECO:0000256" key="5">
    <source>
        <dbReference type="SAM" id="MobiDB-lite"/>
    </source>
</evidence>
<evidence type="ECO:0000305" key="6"/>
<dbReference type="EC" id="4.1.1.90" evidence="3"/>
<dbReference type="EMBL" id="AF312035">
    <property type="protein sequence ID" value="AAG30935.1"/>
    <property type="molecule type" value="mRNA"/>
</dbReference>
<dbReference type="RefSeq" id="NP_001009750.1">
    <property type="nucleotide sequence ID" value="NM_001009750.1"/>
</dbReference>
<dbReference type="STRING" id="9940.ENSOARP00000022044"/>
<dbReference type="PaxDb" id="9940-ENSOARP00000022044"/>
<dbReference type="Ensembl" id="ENSOART00220014357">
    <property type="protein sequence ID" value="ENSOARP00220008404"/>
    <property type="gene ID" value="ENSOARG00220008450"/>
</dbReference>
<dbReference type="Ensembl" id="ENSOART00225061822">
    <property type="protein sequence ID" value="ENSOARP00225030902"/>
    <property type="gene ID" value="ENSOARG00225037416"/>
</dbReference>
<dbReference type="GeneID" id="443129"/>
<dbReference type="KEGG" id="oas:443129"/>
<dbReference type="CTD" id="2677"/>
<dbReference type="eggNOG" id="ENOG502QRU2">
    <property type="taxonomic scope" value="Eukaryota"/>
</dbReference>
<dbReference type="OrthoDB" id="206689at2759"/>
<dbReference type="Proteomes" id="UP000002356">
    <property type="component" value="Unplaced"/>
</dbReference>
<dbReference type="GO" id="GO:0005789">
    <property type="term" value="C:endoplasmic reticulum membrane"/>
    <property type="evidence" value="ECO:0007669"/>
    <property type="project" value="UniProtKB-SubCell"/>
</dbReference>
<dbReference type="GO" id="GO:0008488">
    <property type="term" value="F:gamma-glutamyl carboxylase activity"/>
    <property type="evidence" value="ECO:0007669"/>
    <property type="project" value="UniProtKB-EC"/>
</dbReference>
<dbReference type="GO" id="GO:0019842">
    <property type="term" value="F:vitamin binding"/>
    <property type="evidence" value="ECO:0007669"/>
    <property type="project" value="TreeGrafter"/>
</dbReference>
<dbReference type="InterPro" id="IPR011020">
    <property type="entry name" value="HTTM-like"/>
</dbReference>
<dbReference type="InterPro" id="IPR053934">
    <property type="entry name" value="HTTM_dom"/>
</dbReference>
<dbReference type="InterPro" id="IPR011051">
    <property type="entry name" value="RmlC_Cupin_sf"/>
</dbReference>
<dbReference type="InterPro" id="IPR007782">
    <property type="entry name" value="VKG_COase"/>
</dbReference>
<dbReference type="InterPro" id="IPR053935">
    <property type="entry name" value="VKGC_lumenal_dom"/>
</dbReference>
<dbReference type="PANTHER" id="PTHR12639">
    <property type="entry name" value="VITAMIN K-DEPENDENT GAMMA-CARBOXYLASE"/>
    <property type="match status" value="1"/>
</dbReference>
<dbReference type="PANTHER" id="PTHR12639:SF6">
    <property type="entry name" value="VITAMIN K-DEPENDENT GAMMA-CARBOXYLASE"/>
    <property type="match status" value="1"/>
</dbReference>
<dbReference type="Pfam" id="PF05090">
    <property type="entry name" value="HTTM"/>
    <property type="match status" value="1"/>
</dbReference>
<dbReference type="Pfam" id="PF22777">
    <property type="entry name" value="VKGC_lumenal_dom"/>
    <property type="match status" value="1"/>
</dbReference>
<dbReference type="SMART" id="SM00752">
    <property type="entry name" value="HTTM"/>
    <property type="match status" value="1"/>
</dbReference>
<dbReference type="SUPFAM" id="SSF51182">
    <property type="entry name" value="RmlC-like cupins"/>
    <property type="match status" value="1"/>
</dbReference>
<reference key="1">
    <citation type="submission" date="2000-10" db="EMBL/GenBank/DDBJ databases">
        <title>The sequence of the ovine gamma-carboxylase cDNA.</title>
        <authorList>
            <person name="McCue J.M."/>
            <person name="Gordy P.W."/>
            <person name="Cantlon J.D."/>
            <person name="Baker D.C."/>
            <person name="Bowen R.A."/>
        </authorList>
    </citation>
    <scope>NUCLEOTIDE SEQUENCE [MRNA]</scope>
    <source>
        <tissue>Liver</tissue>
    </source>
</reference>
<accession>Q9GL59</accession>
<name>VKGC_SHEEP</name>
<feature type="initiator methionine" description="Removed" evidence="3">
    <location>
        <position position="1"/>
    </location>
</feature>
<feature type="chain" id="PRO_0000191827" description="Vitamin K-dependent gamma-carboxylase">
    <location>
        <begin position="2"/>
        <end position="758"/>
    </location>
</feature>
<feature type="topological domain" description="Cytoplasmic" evidence="4">
    <location>
        <begin position="2"/>
        <end position="60"/>
    </location>
</feature>
<feature type="transmembrane region" description="Helical" evidence="4">
    <location>
        <begin position="61"/>
        <end position="81"/>
    </location>
</feature>
<feature type="topological domain" description="Lumenal" evidence="4">
    <location>
        <begin position="82"/>
        <end position="113"/>
    </location>
</feature>
<feature type="transmembrane region" description="Helical" evidence="4">
    <location>
        <begin position="114"/>
        <end position="134"/>
    </location>
</feature>
<feature type="topological domain" description="Cytoplasmic" evidence="4">
    <location>
        <begin position="135"/>
        <end position="136"/>
    </location>
</feature>
<feature type="transmembrane region" description="Helical" evidence="4">
    <location>
        <begin position="137"/>
        <end position="157"/>
    </location>
</feature>
<feature type="topological domain" description="Lumenal" evidence="4">
    <location>
        <begin position="158"/>
        <end position="292"/>
    </location>
</feature>
<feature type="transmembrane region" description="Helical" evidence="4">
    <location>
        <begin position="293"/>
        <end position="313"/>
    </location>
</feature>
<feature type="topological domain" description="Cytoplasmic" evidence="4">
    <location>
        <begin position="314"/>
        <end position="361"/>
    </location>
</feature>
<feature type="transmembrane region" description="Helical" evidence="4">
    <location>
        <begin position="362"/>
        <end position="382"/>
    </location>
</feature>
<feature type="topological domain" description="Lumenal" evidence="4">
    <location>
        <begin position="383"/>
        <end position="758"/>
    </location>
</feature>
<feature type="region of interest" description="Disordered" evidence="5">
    <location>
        <begin position="1"/>
        <end position="34"/>
    </location>
</feature>
<feature type="region of interest" description="Disordered" evidence="5">
    <location>
        <begin position="726"/>
        <end position="758"/>
    </location>
</feature>
<feature type="compositionally biased region" description="Basic and acidic residues" evidence="5">
    <location>
        <begin position="12"/>
        <end position="22"/>
    </location>
</feature>
<feature type="compositionally biased region" description="Polar residues" evidence="5">
    <location>
        <begin position="23"/>
        <end position="33"/>
    </location>
</feature>
<feature type="compositionally biased region" description="Basic and acidic residues" evidence="5">
    <location>
        <begin position="749"/>
        <end position="758"/>
    </location>
</feature>
<feature type="modified residue" description="N-acetylalanine" evidence="3">
    <location>
        <position position="2"/>
    </location>
</feature>
<feature type="disulfide bond" evidence="1">
    <location>
        <begin position="99"/>
        <end position="450"/>
    </location>
</feature>
<proteinExistence type="evidence at transcript level"/>
<sequence>MAVSARPARAPRGPDKVKKDKAAQTSGPRQGSQMGKLLGFEWTDVSSWERLVTLLNRPTDPASLAVFRFLFGLMMVLDIPQERGLSSLDRRYLDGLEVCRFPLLDALQPLPLDWMYLVYTIMFLGALGMMLGLCYRISCVLFLLPYWYVFLLDKTSWNNHSYLYGLLAFQLTFVDAHHYWSVDGLLRARKRNAHVPLWNYAVLRGQIFIVYFIAGIKKLDADWVEGYSMEYLSRHWLFSPFKLVLSEEMTSLLVVHWCGLLLDLSAGFLLFFDASRPIGFVFVSYFHCMNSQLFSIGMFPYVMLASSPLFCSPEWPRKLVAHCPKKLQELLPLRTAPQPSTSCMYKRSRARGSQKPGLRHQLSTAFTLLYLLEQLFLPYSHFLTQGYNNWTNGLYGYSWDMMVHSRSHQHVKITYRDGRTGELGYLNPGVFTQSRRWKDHADMLKQYATCLSRLLPKYNVTEPQIYFDIWVSINDRFQQRIFDPRVDIVQAAWSPFQRTPWLQPLLMDLSPWRTKLQEIKSSLDNHTEVVFIADFPGLHLENFVSEDLGNTSIQLLQGEVTVELVAEQKNQTLQEGEKMQLPAGEYHKVYTVSSSPSCYMYIYVNTTEVALEQDLAYLQELKEKVENGSETGPLPPELQPLLEGEVKGGPEPTPLVQTFLRRQQRLQEIERRRNAPFYERFVRFLLRKLFIFRRSFLMTCISLRNLALGRPSLEQLAQEVTYANLRPFEPAGEPSPVNTDSSNPNPPEPDSHPVHSEF</sequence>
<protein>
    <recommendedName>
        <fullName>Vitamin K-dependent gamma-carboxylase</fullName>
        <ecNumber evidence="3">4.1.1.90</ecNumber>
    </recommendedName>
    <alternativeName>
        <fullName>Gamma-glutamyl carboxylase</fullName>
    </alternativeName>
    <alternativeName>
        <fullName>Peptidyl-glutamate 4-carboxylase</fullName>
    </alternativeName>
    <alternativeName>
        <fullName>Vitamin K gamma glutamyl carboxylase</fullName>
    </alternativeName>
</protein>
<gene>
    <name type="primary">GGCX</name>
</gene>
<comment type="function">
    <text evidence="3">Mediates the vitamin K-dependent carboxylation of glutamate residues to calcium-binding gamma-carboxyglutamate (Gla) residues with the concomitant conversion of the reduced hydroquinone form of vitamin K to vitamin K epoxide. Catalyzes gamma-carboxylation of various proteins, such as blood coagulation factors (F2, F7, F9 and F10), osteocalcin (BGLAP) or matrix Gla protein (MGP).</text>
</comment>
<comment type="catalytic activity">
    <reaction evidence="3">
        <text>4-carboxy-L-glutamyl-[protein] + 2,3-epoxyphylloquinone + H2O + H(+) = phylloquinol + L-glutamyl-[protein] + CO2 + O2</text>
        <dbReference type="Rhea" id="RHEA:45140"/>
        <dbReference type="Rhea" id="RHEA-COMP:10208"/>
        <dbReference type="Rhea" id="RHEA-COMP:11094"/>
        <dbReference type="ChEBI" id="CHEBI:15377"/>
        <dbReference type="ChEBI" id="CHEBI:15378"/>
        <dbReference type="ChEBI" id="CHEBI:15379"/>
        <dbReference type="ChEBI" id="CHEBI:15759"/>
        <dbReference type="ChEBI" id="CHEBI:16526"/>
        <dbReference type="ChEBI" id="CHEBI:28433"/>
        <dbReference type="ChEBI" id="CHEBI:29973"/>
        <dbReference type="ChEBI" id="CHEBI:84990"/>
        <dbReference type="EC" id="4.1.1.90"/>
    </reaction>
    <physiologicalReaction direction="right-to-left" evidence="3">
        <dbReference type="Rhea" id="RHEA:45142"/>
    </physiologicalReaction>
</comment>
<comment type="subunit">
    <text evidence="2 3">Monomer (By similarity). May interact with CALU (By similarity).</text>
</comment>
<comment type="subcellular location">
    <subcellularLocation>
        <location evidence="3">Endoplasmic reticulum membrane</location>
        <topology evidence="3">Multi-pass membrane protein</topology>
    </subcellularLocation>
</comment>
<comment type="miscellaneous">
    <text>The vitamin K-dependent protein substrates of carboxylase have usually a propeptide that binds to a high-affinity site on the carboxylase. CO(2), O(2) and reduced vitamin K are cosubstrates.</text>
</comment>
<comment type="similarity">
    <text evidence="6">Belongs to the vitamin K-dependent gamma-carboxylase family.</text>
</comment>